<protein>
    <recommendedName>
        <fullName>Apolipoprotein E</fullName>
        <shortName>Apo-E</shortName>
    </recommendedName>
</protein>
<accession>P0DUZ5</accession>
<comment type="function">
    <text evidence="1">APOE is an apolipoprotein, a protein associating with lipid particles, that mainly functions in lipoprotein-mediated lipid transport between organs via the plasma and interstitial fluids. APOE is a core component of plasma lipoproteins and is involved in their production, conversion and clearance. Apolipoproteins are amphipathic molecules that interact both with lipids of the lipoprotein particle core and the aqueous environment of the plasma. As such, APOE associates with chylomicrons, chylomicron remnants, very low density lipoproteins (VLDL) and intermediate density lipoproteins (IDL) but shows a preferential binding to high-density lipoproteins (HDL). It also binds a wide range of cellular receptors including the LDL receptor/LDLR, the LDL receptor-related proteins LRP1, LRP2 and LRP8 and the very low-density lipoprotein receptor/VLDLR that mediate the cellular uptake of the APOE-containing lipoprotein particles. Finally, APOE also has a heparin-binding activity and binds heparan-sulfate proteoglycans on the surface of cells, a property that supports the capture and the receptor-mediated uptake of APOE-containing lipoproteins by cells. A main function of APOE is to mediate lipoprotein clearance through the uptake of chylomicrons, VLDLs, and HDLs by hepatocytes. APOE is also involved in the biosynthesis by the liver of VLDLs as well as their uptake by peripheral tissues ensuring the delivery of triglycerides and energy storage in muscle, heart and adipose tissues. By participating in the lipoprotein-mediated distribution of lipids among tissues, APOE plays a critical role in plasma and tissues lipid homeostasis. APOE is also involved in two steps of reverse cholesterol transport, the HDLs-mediated transport of cholesterol from peripheral tissues to the liver, and thereby plays an important role in cholesterol homeostasis. First, it is functionally associated with ABCA1 in the biogenesis of HDLs in tissues. Second, it is enriched in circulating HDLs and mediates their uptake by hepatocytes. APOE also plays an important role in lipid transport in the central nervous system, regulating neuron survival and sprouting.</text>
</comment>
<comment type="subunit">
    <text evidence="1">Homotetramer. May interact with ABCA1; functionally associated with ABCA1 in the biogenesis of HDLs. May interact with APP/A4 amyloid-beta peptide; the interaction is extremely stable in vitro but its physiological significance is unclear. May interact with MAPT. May interact with MAP2. In the cerebrospinal fluid, interacts with secreted SORL1. Interacts with PMEL; this allows the loading of PMEL luminal fragment on ILVs to induce fibril nucleation.</text>
</comment>
<comment type="subcellular location">
    <subcellularLocation>
        <location evidence="1">Secreted</location>
    </subcellularLocation>
    <subcellularLocation>
        <location evidence="1">Secreted</location>
        <location evidence="1">Extracellular space</location>
    </subcellularLocation>
    <subcellularLocation>
        <location evidence="1">Secreted</location>
        <location evidence="1">Extracellular space</location>
        <location evidence="1">Extracellular matrix</location>
    </subcellularLocation>
    <subcellularLocation>
        <location evidence="1">Extracellular vesicle</location>
    </subcellularLocation>
    <subcellularLocation>
        <location evidence="1">Endosome</location>
        <location evidence="1">Multivesicular body</location>
    </subcellularLocation>
    <text evidence="1">In the plasma, APOE is associated with chylomicrons, chylomicrons remnants, VLDL, LDL and HDL lipoproteins. Lipid poor oligomeric APOE is associated with the extracellular matrix in a calcium- and heparan-sulfate proteoglycans-dependent manner. Lipidation induces the release from the extracellular matrix. Colocalizes with CD63 and PMEL at exosomes and in intraluminal vesicles within multivesicular endosomes.</text>
</comment>
<comment type="PTM">
    <text evidence="1">APOE exists as multiple glycosylated and sialylated glycoforms within cells and in plasma. The extent of glycosylation and sialylation are tissue and context specific.</text>
</comment>
<comment type="PTM">
    <text evidence="1">Glycated in plasma VLDL.</text>
</comment>
<comment type="PTM">
    <text evidence="1">Phosphorylated by FAM20C in the extracellular medium.</text>
</comment>
<comment type="similarity">
    <text evidence="4">Belongs to the apolipoprotein A1/A4/E family.</text>
</comment>
<feature type="signal peptide" evidence="3">
    <location>
        <begin position="1"/>
        <end position="18"/>
    </location>
</feature>
<feature type="chain" id="PRO_0000454019" description="Apolipoprotein E">
    <location>
        <begin position="19"/>
        <end position="312"/>
    </location>
</feature>
<feature type="repeat" description="1">
    <location>
        <begin position="72"/>
        <end position="93"/>
    </location>
</feature>
<feature type="repeat" description="2">
    <location>
        <begin position="94"/>
        <end position="115"/>
    </location>
</feature>
<feature type="repeat" description="3">
    <location>
        <begin position="116"/>
        <end position="137"/>
    </location>
</feature>
<feature type="repeat" description="4">
    <location>
        <begin position="138"/>
        <end position="159"/>
    </location>
</feature>
<feature type="repeat" description="5">
    <location>
        <begin position="160"/>
        <end position="181"/>
    </location>
</feature>
<feature type="repeat" description="6">
    <location>
        <begin position="182"/>
        <end position="203"/>
    </location>
</feature>
<feature type="repeat" description="7">
    <location>
        <begin position="204"/>
        <end position="225"/>
    </location>
</feature>
<feature type="repeat" description="8">
    <location>
        <begin position="226"/>
        <end position="247"/>
    </location>
</feature>
<feature type="region of interest" description="8 X 22 AA approximate tandem repeats">
    <location>
        <begin position="72"/>
        <end position="247"/>
    </location>
</feature>
<feature type="region of interest" description="LDL and other lipoprotein receptors binding" evidence="1">
    <location>
        <begin position="150"/>
        <end position="160"/>
    </location>
</feature>
<feature type="region of interest" description="Lipid-binding and lipoprotein association" evidence="1">
    <location>
        <begin position="202"/>
        <end position="282"/>
    </location>
</feature>
<feature type="region of interest" description="Homooligomerization" evidence="1">
    <location>
        <begin position="258"/>
        <end position="312"/>
    </location>
</feature>
<feature type="region of interest" description="Specificity for association with VLDL" evidence="1">
    <location>
        <begin position="270"/>
        <end position="282"/>
    </location>
</feature>
<feature type="binding site" evidence="1">
    <location>
        <begin position="154"/>
        <end position="157"/>
    </location>
    <ligand>
        <name>heparin</name>
        <dbReference type="ChEBI" id="CHEBI:28304"/>
    </ligand>
</feature>
<feature type="binding site" evidence="1">
    <location>
        <begin position="221"/>
        <end position="228"/>
    </location>
    <ligand>
        <name>heparin</name>
        <dbReference type="ChEBI" id="CHEBI:28304"/>
    </ligand>
</feature>
<feature type="modified residue" description="Methionine sulfoxide" evidence="2">
    <location>
        <position position="135"/>
    </location>
</feature>
<feature type="modified residue" description="Phosphoserine" evidence="2">
    <location>
        <position position="139"/>
    </location>
</feature>
<organism>
    <name type="scientific">Mus pahari</name>
    <name type="common">Gairdner's shrew-mouse</name>
    <name type="synonym">Coelomys pahari</name>
    <dbReference type="NCBI Taxonomy" id="10093"/>
    <lineage>
        <taxon>Eukaryota</taxon>
        <taxon>Metazoa</taxon>
        <taxon>Chordata</taxon>
        <taxon>Craniata</taxon>
        <taxon>Vertebrata</taxon>
        <taxon>Euteleostomi</taxon>
        <taxon>Mammalia</taxon>
        <taxon>Eutheria</taxon>
        <taxon>Euarchontoglires</taxon>
        <taxon>Glires</taxon>
        <taxon>Rodentia</taxon>
        <taxon>Myomorpha</taxon>
        <taxon>Muroidea</taxon>
        <taxon>Muridae</taxon>
        <taxon>Murinae</taxon>
        <taxon>Mus</taxon>
        <taxon>Coelomys</taxon>
    </lineage>
</organism>
<gene>
    <name type="primary">Apoe</name>
</gene>
<proteinExistence type="inferred from homology"/>
<keyword id="KW-0162">Chylomicron</keyword>
<keyword id="KW-0967">Endosome</keyword>
<keyword id="KW-0272">Extracellular matrix</keyword>
<keyword id="KW-0325">Glycoprotein</keyword>
<keyword id="KW-0345">HDL</keyword>
<keyword id="KW-0358">Heparin-binding</keyword>
<keyword id="KW-0445">Lipid transport</keyword>
<keyword id="KW-0446">Lipid-binding</keyword>
<keyword id="KW-0558">Oxidation</keyword>
<keyword id="KW-0597">Phosphoprotein</keyword>
<keyword id="KW-0677">Repeat</keyword>
<keyword id="KW-0964">Secreted</keyword>
<keyword id="KW-0732">Signal</keyword>
<keyword id="KW-0813">Transport</keyword>
<keyword id="KW-0850">VLDL</keyword>
<evidence type="ECO:0000250" key="1">
    <source>
        <dbReference type="UniProtKB" id="P02649"/>
    </source>
</evidence>
<evidence type="ECO:0000250" key="2">
    <source>
        <dbReference type="UniProtKB" id="P08226"/>
    </source>
</evidence>
<evidence type="ECO:0000255" key="3"/>
<evidence type="ECO:0000305" key="4"/>
<name>APOE_MUSPA</name>
<reference key="1">
    <citation type="submission" date="2017-04" db="EMBL/GenBank/DDBJ databases">
        <authorList>
            <person name="Clarke L."/>
            <person name="Flicek P."/>
            <person name="Streeter I."/>
            <person name="Bradley H."/>
            <person name="Richardson D."/>
        </authorList>
    </citation>
    <scope>NUCLEOTIDE SEQUENCE [LARGE SCALE GENOMIC DNA]</scope>
    <source>
        <tissue>Tail</tissue>
    </source>
</reference>
<reference key="2">
    <citation type="unpublished observations" date="2021-07">
        <authorList>
            <person name="Puppione D.L."/>
        </authorList>
    </citation>
    <scope>IDENTIFICATION</scope>
</reference>
<dbReference type="EMBL" id="FMBV02008358">
    <property type="status" value="NOT_ANNOTATED_CDS"/>
    <property type="molecule type" value="Genomic_DNA"/>
</dbReference>
<dbReference type="RefSeq" id="XP_021074836.1">
    <property type="nucleotide sequence ID" value="XM_021219177.2"/>
</dbReference>
<dbReference type="SMR" id="P0DUZ5"/>
<dbReference type="GeneID" id="110336554"/>
<dbReference type="GO" id="GO:0034360">
    <property type="term" value="C:chylomicron remnant"/>
    <property type="evidence" value="ECO:0007669"/>
    <property type="project" value="Ensembl"/>
</dbReference>
<dbReference type="GO" id="GO:0005783">
    <property type="term" value="C:endoplasmic reticulum"/>
    <property type="evidence" value="ECO:0007669"/>
    <property type="project" value="Ensembl"/>
</dbReference>
<dbReference type="GO" id="GO:0070062">
    <property type="term" value="C:extracellular exosome"/>
    <property type="evidence" value="ECO:0000250"/>
    <property type="project" value="UniProtKB"/>
</dbReference>
<dbReference type="GO" id="GO:0031012">
    <property type="term" value="C:extracellular matrix"/>
    <property type="evidence" value="ECO:0007669"/>
    <property type="project" value="Ensembl"/>
</dbReference>
<dbReference type="GO" id="GO:0098978">
    <property type="term" value="C:glutamatergic synapse"/>
    <property type="evidence" value="ECO:0007669"/>
    <property type="project" value="Ensembl"/>
</dbReference>
<dbReference type="GO" id="GO:0005794">
    <property type="term" value="C:Golgi apparatus"/>
    <property type="evidence" value="ECO:0007669"/>
    <property type="project" value="Ensembl"/>
</dbReference>
<dbReference type="GO" id="GO:0034364">
    <property type="term" value="C:high-density lipoprotein particle"/>
    <property type="evidence" value="ECO:0007669"/>
    <property type="project" value="UniProtKB-KW"/>
</dbReference>
<dbReference type="GO" id="GO:0034363">
    <property type="term" value="C:intermediate-density lipoprotein particle"/>
    <property type="evidence" value="ECO:0007669"/>
    <property type="project" value="Ensembl"/>
</dbReference>
<dbReference type="GO" id="GO:0034362">
    <property type="term" value="C:low-density lipoprotein particle"/>
    <property type="evidence" value="ECO:0007669"/>
    <property type="project" value="Ensembl"/>
</dbReference>
<dbReference type="GO" id="GO:0042470">
    <property type="term" value="C:melanosome"/>
    <property type="evidence" value="ECO:0007669"/>
    <property type="project" value="Ensembl"/>
</dbReference>
<dbReference type="GO" id="GO:0097487">
    <property type="term" value="C:multivesicular body, internal vesicle"/>
    <property type="evidence" value="ECO:0000250"/>
    <property type="project" value="UniProtKB"/>
</dbReference>
<dbReference type="GO" id="GO:0005886">
    <property type="term" value="C:plasma membrane"/>
    <property type="evidence" value="ECO:0007669"/>
    <property type="project" value="GOC"/>
</dbReference>
<dbReference type="GO" id="GO:0043083">
    <property type="term" value="C:synaptic cleft"/>
    <property type="evidence" value="ECO:0007669"/>
    <property type="project" value="Ensembl"/>
</dbReference>
<dbReference type="GO" id="GO:0034361">
    <property type="term" value="C:very-low-density lipoprotein particle"/>
    <property type="evidence" value="ECO:0007669"/>
    <property type="project" value="UniProtKB-KW"/>
</dbReference>
<dbReference type="GO" id="GO:0001540">
    <property type="term" value="F:amyloid-beta binding"/>
    <property type="evidence" value="ECO:0007669"/>
    <property type="project" value="Ensembl"/>
</dbReference>
<dbReference type="GO" id="GO:0016209">
    <property type="term" value="F:antioxidant activity"/>
    <property type="evidence" value="ECO:0007669"/>
    <property type="project" value="Ensembl"/>
</dbReference>
<dbReference type="GO" id="GO:0120020">
    <property type="term" value="F:cholesterol transfer activity"/>
    <property type="evidence" value="ECO:0007669"/>
    <property type="project" value="Ensembl"/>
</dbReference>
<dbReference type="GO" id="GO:0019899">
    <property type="term" value="F:enzyme binding"/>
    <property type="evidence" value="ECO:0007669"/>
    <property type="project" value="Ensembl"/>
</dbReference>
<dbReference type="GO" id="GO:0043395">
    <property type="term" value="F:heparan sulfate proteoglycan binding"/>
    <property type="evidence" value="ECO:0007669"/>
    <property type="project" value="Ensembl"/>
</dbReference>
<dbReference type="GO" id="GO:0008201">
    <property type="term" value="F:heparin binding"/>
    <property type="evidence" value="ECO:0007669"/>
    <property type="project" value="UniProtKB-KW"/>
</dbReference>
<dbReference type="GO" id="GO:0071813">
    <property type="term" value="F:lipoprotein particle binding"/>
    <property type="evidence" value="ECO:0007669"/>
    <property type="project" value="Ensembl"/>
</dbReference>
<dbReference type="GO" id="GO:0050750">
    <property type="term" value="F:low-density lipoprotein particle receptor binding"/>
    <property type="evidence" value="ECO:0007669"/>
    <property type="project" value="Ensembl"/>
</dbReference>
<dbReference type="GO" id="GO:0046911">
    <property type="term" value="F:metal chelating activity"/>
    <property type="evidence" value="ECO:0007669"/>
    <property type="project" value="Ensembl"/>
</dbReference>
<dbReference type="GO" id="GO:0060228">
    <property type="term" value="F:phosphatidylcholine-sterol O-acyltransferase activator activity"/>
    <property type="evidence" value="ECO:0007669"/>
    <property type="project" value="Ensembl"/>
</dbReference>
<dbReference type="GO" id="GO:0005543">
    <property type="term" value="F:phospholipid binding"/>
    <property type="evidence" value="ECO:0007669"/>
    <property type="project" value="Ensembl"/>
</dbReference>
<dbReference type="GO" id="GO:0042803">
    <property type="term" value="F:protein homodimerization activity"/>
    <property type="evidence" value="ECO:0007669"/>
    <property type="project" value="Ensembl"/>
</dbReference>
<dbReference type="GO" id="GO:0048018">
    <property type="term" value="F:receptor ligand activity"/>
    <property type="evidence" value="ECO:0007669"/>
    <property type="project" value="Ensembl"/>
</dbReference>
<dbReference type="GO" id="GO:0048156">
    <property type="term" value="F:tau protein binding"/>
    <property type="evidence" value="ECO:0007669"/>
    <property type="project" value="Ensembl"/>
</dbReference>
<dbReference type="GO" id="GO:0070326">
    <property type="term" value="F:very-low-density lipoprotein particle receptor binding"/>
    <property type="evidence" value="ECO:0007669"/>
    <property type="project" value="Ensembl"/>
</dbReference>
<dbReference type="GO" id="GO:0097113">
    <property type="term" value="P:AMPA glutamate receptor clustering"/>
    <property type="evidence" value="ECO:0007669"/>
    <property type="project" value="Ensembl"/>
</dbReference>
<dbReference type="GO" id="GO:0042982">
    <property type="term" value="P:amyloid precursor protein metabolic process"/>
    <property type="evidence" value="ECO:0007669"/>
    <property type="project" value="Ensembl"/>
</dbReference>
<dbReference type="GO" id="GO:0048844">
    <property type="term" value="P:artery morphogenesis"/>
    <property type="evidence" value="ECO:0007669"/>
    <property type="project" value="Ensembl"/>
</dbReference>
<dbReference type="GO" id="GO:0071402">
    <property type="term" value="P:cellular response to lipoprotein particle stimulus"/>
    <property type="evidence" value="ECO:0007669"/>
    <property type="project" value="Ensembl"/>
</dbReference>
<dbReference type="GO" id="GO:0006707">
    <property type="term" value="P:cholesterol catabolic process"/>
    <property type="evidence" value="ECO:0007669"/>
    <property type="project" value="Ensembl"/>
</dbReference>
<dbReference type="GO" id="GO:0033344">
    <property type="term" value="P:cholesterol efflux"/>
    <property type="evidence" value="ECO:0007669"/>
    <property type="project" value="Ensembl"/>
</dbReference>
<dbReference type="GO" id="GO:0042632">
    <property type="term" value="P:cholesterol homeostasis"/>
    <property type="evidence" value="ECO:0007669"/>
    <property type="project" value="Ensembl"/>
</dbReference>
<dbReference type="GO" id="GO:0034382">
    <property type="term" value="P:chylomicron remnant clearance"/>
    <property type="evidence" value="ECO:0007669"/>
    <property type="project" value="Ensembl"/>
</dbReference>
<dbReference type="GO" id="GO:0055089">
    <property type="term" value="P:fatty acid homeostasis"/>
    <property type="evidence" value="ECO:0007669"/>
    <property type="project" value="Ensembl"/>
</dbReference>
<dbReference type="GO" id="GO:0007186">
    <property type="term" value="P:G protein-coupled receptor signaling pathway"/>
    <property type="evidence" value="ECO:0007669"/>
    <property type="project" value="Ensembl"/>
</dbReference>
<dbReference type="GO" id="GO:0010467">
    <property type="term" value="P:gene expression"/>
    <property type="evidence" value="ECO:0007669"/>
    <property type="project" value="Ensembl"/>
</dbReference>
<dbReference type="GO" id="GO:0034380">
    <property type="term" value="P:high-density lipoprotein particle assembly"/>
    <property type="evidence" value="ECO:0007669"/>
    <property type="project" value="Ensembl"/>
</dbReference>
<dbReference type="GO" id="GO:0034384">
    <property type="term" value="P:high-density lipoprotein particle clearance"/>
    <property type="evidence" value="ECO:0007669"/>
    <property type="project" value="Ensembl"/>
</dbReference>
<dbReference type="GO" id="GO:0034375">
    <property type="term" value="P:high-density lipoprotein particle remodeling"/>
    <property type="evidence" value="ECO:0007669"/>
    <property type="project" value="Ensembl"/>
</dbReference>
<dbReference type="GO" id="GO:0071831">
    <property type="term" value="P:intermediate-density lipoprotein particle clearance"/>
    <property type="evidence" value="ECO:0007669"/>
    <property type="project" value="Ensembl"/>
</dbReference>
<dbReference type="GO" id="GO:0006874">
    <property type="term" value="P:intracellular calcium ion homeostasis"/>
    <property type="evidence" value="ECO:0007669"/>
    <property type="project" value="Ensembl"/>
</dbReference>
<dbReference type="GO" id="GO:0010877">
    <property type="term" value="P:lipid transport involved in lipid storage"/>
    <property type="evidence" value="ECO:0007669"/>
    <property type="project" value="Ensembl"/>
</dbReference>
<dbReference type="GO" id="GO:0042158">
    <property type="term" value="P:lipoprotein biosynthetic process"/>
    <property type="evidence" value="ECO:0007669"/>
    <property type="project" value="Ensembl"/>
</dbReference>
<dbReference type="GO" id="GO:0042159">
    <property type="term" value="P:lipoprotein catabolic process"/>
    <property type="evidence" value="ECO:0007669"/>
    <property type="project" value="Ensembl"/>
</dbReference>
<dbReference type="GO" id="GO:0035641">
    <property type="term" value="P:locomotory exploration behavior"/>
    <property type="evidence" value="ECO:0007669"/>
    <property type="project" value="Ensembl"/>
</dbReference>
<dbReference type="GO" id="GO:0015909">
    <property type="term" value="P:long-chain fatty acid transport"/>
    <property type="evidence" value="ECO:0007669"/>
    <property type="project" value="Ensembl"/>
</dbReference>
<dbReference type="GO" id="GO:0007616">
    <property type="term" value="P:long-term memory"/>
    <property type="evidence" value="ECO:0007669"/>
    <property type="project" value="Ensembl"/>
</dbReference>
<dbReference type="GO" id="GO:0034374">
    <property type="term" value="P:low-density lipoprotein particle remodeling"/>
    <property type="evidence" value="ECO:0007669"/>
    <property type="project" value="Ensembl"/>
</dbReference>
<dbReference type="GO" id="GO:0051651">
    <property type="term" value="P:maintenance of location in cell"/>
    <property type="evidence" value="ECO:0007669"/>
    <property type="project" value="Ensembl"/>
</dbReference>
<dbReference type="GO" id="GO:0032438">
    <property type="term" value="P:melanosome organization"/>
    <property type="evidence" value="ECO:0000250"/>
    <property type="project" value="UniProtKB"/>
</dbReference>
<dbReference type="GO" id="GO:1905907">
    <property type="term" value="P:negative regulation of amyloid fibril formation"/>
    <property type="evidence" value="ECO:0007669"/>
    <property type="project" value="Ensembl"/>
</dbReference>
<dbReference type="GO" id="GO:1902430">
    <property type="term" value="P:negative regulation of amyloid-beta formation"/>
    <property type="evidence" value="ECO:0007669"/>
    <property type="project" value="Ensembl"/>
</dbReference>
<dbReference type="GO" id="GO:0043537">
    <property type="term" value="P:negative regulation of blood vessel endothelial cell migration"/>
    <property type="evidence" value="ECO:0007669"/>
    <property type="project" value="Ensembl"/>
</dbReference>
<dbReference type="GO" id="GO:0090090">
    <property type="term" value="P:negative regulation of canonical Wnt signaling pathway"/>
    <property type="evidence" value="ECO:0007669"/>
    <property type="project" value="Ensembl"/>
</dbReference>
<dbReference type="GO" id="GO:0045541">
    <property type="term" value="P:negative regulation of cholesterol biosynthetic process"/>
    <property type="evidence" value="ECO:0007669"/>
    <property type="project" value="Ensembl"/>
</dbReference>
<dbReference type="GO" id="GO:0001937">
    <property type="term" value="P:negative regulation of endothelial cell proliferation"/>
    <property type="evidence" value="ECO:0007669"/>
    <property type="project" value="Ensembl"/>
</dbReference>
<dbReference type="GO" id="GO:0010629">
    <property type="term" value="P:negative regulation of gene expression"/>
    <property type="evidence" value="ECO:0007669"/>
    <property type="project" value="Ensembl"/>
</dbReference>
<dbReference type="GO" id="GO:0050728">
    <property type="term" value="P:negative regulation of inflammatory response"/>
    <property type="evidence" value="ECO:0007669"/>
    <property type="project" value="Ensembl"/>
</dbReference>
<dbReference type="GO" id="GO:1900272">
    <property type="term" value="P:negative regulation of long-term synaptic potentiation"/>
    <property type="evidence" value="ECO:0007669"/>
    <property type="project" value="Ensembl"/>
</dbReference>
<dbReference type="GO" id="GO:0010977">
    <property type="term" value="P:negative regulation of neuron projection development"/>
    <property type="evidence" value="ECO:0007669"/>
    <property type="project" value="Ensembl"/>
</dbReference>
<dbReference type="GO" id="GO:0010544">
    <property type="term" value="P:negative regulation of platelet activation"/>
    <property type="evidence" value="ECO:0007669"/>
    <property type="project" value="Ensembl"/>
</dbReference>
<dbReference type="GO" id="GO:0050709">
    <property type="term" value="P:negative regulation of protein secretion"/>
    <property type="evidence" value="ECO:0007669"/>
    <property type="project" value="Ensembl"/>
</dbReference>
<dbReference type="GO" id="GO:0048662">
    <property type="term" value="P:negative regulation of smooth muscle cell proliferation"/>
    <property type="evidence" value="ECO:0007669"/>
    <property type="project" value="Ensembl"/>
</dbReference>
<dbReference type="GO" id="GO:0090209">
    <property type="term" value="P:negative regulation of triglyceride metabolic process"/>
    <property type="evidence" value="ECO:0007669"/>
    <property type="project" value="Ensembl"/>
</dbReference>
<dbReference type="GO" id="GO:0031175">
    <property type="term" value="P:neuron projection development"/>
    <property type="evidence" value="ECO:0007669"/>
    <property type="project" value="Ensembl"/>
</dbReference>
<dbReference type="GO" id="GO:0038060">
    <property type="term" value="P:nitric oxide-cGMP-mediated signaling"/>
    <property type="evidence" value="ECO:0007669"/>
    <property type="project" value="Ensembl"/>
</dbReference>
<dbReference type="GO" id="GO:0097114">
    <property type="term" value="P:NMDA glutamate receptor clustering"/>
    <property type="evidence" value="ECO:0007669"/>
    <property type="project" value="Ensembl"/>
</dbReference>
<dbReference type="GO" id="GO:0033700">
    <property type="term" value="P:phospholipid efflux"/>
    <property type="evidence" value="ECO:0007669"/>
    <property type="project" value="Ensembl"/>
</dbReference>
<dbReference type="GO" id="GO:0044794">
    <property type="term" value="P:positive regulation by host of viral process"/>
    <property type="evidence" value="ECO:0007669"/>
    <property type="project" value="Ensembl"/>
</dbReference>
<dbReference type="GO" id="GO:1900223">
    <property type="term" value="P:positive regulation of amyloid-beta clearance"/>
    <property type="evidence" value="ECO:0007669"/>
    <property type="project" value="Ensembl"/>
</dbReference>
<dbReference type="GO" id="GO:0010875">
    <property type="term" value="P:positive regulation of cholesterol efflux"/>
    <property type="evidence" value="ECO:0007669"/>
    <property type="project" value="Ensembl"/>
</dbReference>
<dbReference type="GO" id="GO:0090205">
    <property type="term" value="P:positive regulation of cholesterol metabolic process"/>
    <property type="evidence" value="ECO:0007669"/>
    <property type="project" value="Ensembl"/>
</dbReference>
<dbReference type="GO" id="GO:0060999">
    <property type="term" value="P:positive regulation of dendritic spine development"/>
    <property type="evidence" value="ECO:0007669"/>
    <property type="project" value="Ensembl"/>
</dbReference>
<dbReference type="GO" id="GO:1902952">
    <property type="term" value="P:positive regulation of dendritic spine maintenance"/>
    <property type="evidence" value="ECO:0007669"/>
    <property type="project" value="Ensembl"/>
</dbReference>
<dbReference type="GO" id="GO:0045893">
    <property type="term" value="P:positive regulation of DNA-templated transcription"/>
    <property type="evidence" value="ECO:0007669"/>
    <property type="project" value="Ensembl"/>
</dbReference>
<dbReference type="GO" id="GO:0045807">
    <property type="term" value="P:positive regulation of endocytosis"/>
    <property type="evidence" value="ECO:0007669"/>
    <property type="project" value="Ensembl"/>
</dbReference>
<dbReference type="GO" id="GO:0070374">
    <property type="term" value="P:positive regulation of ERK1 and ERK2 cascade"/>
    <property type="evidence" value="ECO:0007669"/>
    <property type="project" value="Ensembl"/>
</dbReference>
<dbReference type="GO" id="GO:0046889">
    <property type="term" value="P:positive regulation of lipid biosynthetic process"/>
    <property type="evidence" value="ECO:0007669"/>
    <property type="project" value="Ensembl"/>
</dbReference>
<dbReference type="GO" id="GO:1903002">
    <property type="term" value="P:positive regulation of lipid transport across blood-brain barrier"/>
    <property type="evidence" value="ECO:0007669"/>
    <property type="project" value="Ensembl"/>
</dbReference>
<dbReference type="GO" id="GO:0140077">
    <property type="term" value="P:positive regulation of lipoprotein transport"/>
    <property type="evidence" value="ECO:0007669"/>
    <property type="project" value="Ensembl"/>
</dbReference>
<dbReference type="GO" id="GO:0032805">
    <property type="term" value="P:positive regulation of low-density lipoprotein particle receptor catabolic process"/>
    <property type="evidence" value="ECO:0007669"/>
    <property type="project" value="Ensembl"/>
</dbReference>
<dbReference type="GO" id="GO:0051044">
    <property type="term" value="P:positive regulation of membrane protein ectodomain proteolysis"/>
    <property type="evidence" value="ECO:0007669"/>
    <property type="project" value="Ensembl"/>
</dbReference>
<dbReference type="GO" id="GO:0010976">
    <property type="term" value="P:positive regulation of neuron projection development"/>
    <property type="evidence" value="ECO:0007669"/>
    <property type="project" value="Ensembl"/>
</dbReference>
<dbReference type="GO" id="GO:0045429">
    <property type="term" value="P:positive regulation of nitric oxide biosynthetic process"/>
    <property type="evidence" value="ECO:0007669"/>
    <property type="project" value="Ensembl"/>
</dbReference>
<dbReference type="GO" id="GO:1902995">
    <property type="term" value="P:positive regulation of phospholipid efflux"/>
    <property type="evidence" value="ECO:0007669"/>
    <property type="project" value="Ensembl"/>
</dbReference>
<dbReference type="GO" id="GO:0017038">
    <property type="term" value="P:protein import"/>
    <property type="evidence" value="ECO:0007669"/>
    <property type="project" value="Ensembl"/>
</dbReference>
<dbReference type="GO" id="GO:0006898">
    <property type="term" value="P:receptor-mediated endocytosis"/>
    <property type="evidence" value="ECO:0007669"/>
    <property type="project" value="Ensembl"/>
</dbReference>
<dbReference type="GO" id="GO:0042981">
    <property type="term" value="P:regulation of apoptotic process"/>
    <property type="evidence" value="ECO:0007669"/>
    <property type="project" value="Ensembl"/>
</dbReference>
<dbReference type="GO" id="GO:2000822">
    <property type="term" value="P:regulation of behavioral fear response"/>
    <property type="evidence" value="ECO:0007669"/>
    <property type="project" value="Ensembl"/>
</dbReference>
<dbReference type="GO" id="GO:0032489">
    <property type="term" value="P:regulation of Cdc42 protein signal transduction"/>
    <property type="evidence" value="ECO:0007669"/>
    <property type="project" value="Ensembl"/>
</dbReference>
<dbReference type="GO" id="GO:1905890">
    <property type="term" value="P:regulation of cellular response to very-low-density lipoprotein particle stimulus"/>
    <property type="evidence" value="ECO:0007669"/>
    <property type="project" value="Ensembl"/>
</dbReference>
<dbReference type="GO" id="GO:0045088">
    <property type="term" value="P:regulation of innate immune response"/>
    <property type="evidence" value="ECO:0007669"/>
    <property type="project" value="Ensembl"/>
</dbReference>
<dbReference type="GO" id="GO:0061136">
    <property type="term" value="P:regulation of proteasomal protein catabolic process"/>
    <property type="evidence" value="ECO:0007669"/>
    <property type="project" value="Ensembl"/>
</dbReference>
<dbReference type="GO" id="GO:0043254">
    <property type="term" value="P:regulation of protein-containing complex assembly"/>
    <property type="evidence" value="ECO:0007669"/>
    <property type="project" value="Ensembl"/>
</dbReference>
<dbReference type="GO" id="GO:0061771">
    <property type="term" value="P:response to caloric restriction"/>
    <property type="evidence" value="ECO:0007669"/>
    <property type="project" value="Ensembl"/>
</dbReference>
<dbReference type="GO" id="GO:0002021">
    <property type="term" value="P:response to dietary excess"/>
    <property type="evidence" value="ECO:0007669"/>
    <property type="project" value="Ensembl"/>
</dbReference>
<dbReference type="GO" id="GO:0006979">
    <property type="term" value="P:response to oxidative stress"/>
    <property type="evidence" value="ECO:0007669"/>
    <property type="project" value="Ensembl"/>
</dbReference>
<dbReference type="GO" id="GO:0043691">
    <property type="term" value="P:reverse cholesterol transport"/>
    <property type="evidence" value="ECO:0007669"/>
    <property type="project" value="Ensembl"/>
</dbReference>
<dbReference type="GO" id="GO:0070328">
    <property type="term" value="P:triglyceride homeostasis"/>
    <property type="evidence" value="ECO:0007669"/>
    <property type="project" value="Ensembl"/>
</dbReference>
<dbReference type="GO" id="GO:0006641">
    <property type="term" value="P:triglyceride metabolic process"/>
    <property type="evidence" value="ECO:0007669"/>
    <property type="project" value="Ensembl"/>
</dbReference>
<dbReference type="GO" id="GO:0042311">
    <property type="term" value="P:vasodilation"/>
    <property type="evidence" value="ECO:0007669"/>
    <property type="project" value="Ensembl"/>
</dbReference>
<dbReference type="GO" id="GO:0034447">
    <property type="term" value="P:very-low-density lipoprotein particle clearance"/>
    <property type="evidence" value="ECO:0007669"/>
    <property type="project" value="Ensembl"/>
</dbReference>
<dbReference type="GO" id="GO:0034372">
    <property type="term" value="P:very-low-density lipoprotein particle remodeling"/>
    <property type="evidence" value="ECO:0007669"/>
    <property type="project" value="Ensembl"/>
</dbReference>
<dbReference type="GO" id="GO:0019068">
    <property type="term" value="P:virion assembly"/>
    <property type="evidence" value="ECO:0007669"/>
    <property type="project" value="Ensembl"/>
</dbReference>
<dbReference type="FunFam" id="1.20.120.20:FF:000002">
    <property type="entry name" value="Apolipoprotein E"/>
    <property type="match status" value="1"/>
</dbReference>
<dbReference type="FunFam" id="1.20.120.20:FF:000003">
    <property type="entry name" value="Apolipoprotein E"/>
    <property type="match status" value="1"/>
</dbReference>
<dbReference type="Gene3D" id="1.20.120.20">
    <property type="entry name" value="Apolipoprotein"/>
    <property type="match status" value="2"/>
</dbReference>
<dbReference type="InterPro" id="IPR000074">
    <property type="entry name" value="ApoA_E"/>
</dbReference>
<dbReference type="InterPro" id="IPR050163">
    <property type="entry name" value="Apolipoprotein_A1/A4/E"/>
</dbReference>
<dbReference type="PANTHER" id="PTHR18976">
    <property type="entry name" value="APOLIPOPROTEIN"/>
    <property type="match status" value="1"/>
</dbReference>
<dbReference type="PANTHER" id="PTHR18976:SF2">
    <property type="entry name" value="APOLIPOPROTEIN E"/>
    <property type="match status" value="1"/>
</dbReference>
<dbReference type="Pfam" id="PF01442">
    <property type="entry name" value="Apolipoprotein"/>
    <property type="match status" value="1"/>
</dbReference>
<dbReference type="SUPFAM" id="SSF58113">
    <property type="entry name" value="Apolipoprotein A-I"/>
    <property type="match status" value="1"/>
</dbReference>
<sequence>MKALWAVLLVTLLAGCLAEGEPEVTDQLEWQSSQPWEQALNRFWDYLRWVQTLSDQVQEELQSSQVTQELTVLMEDTMTEVKAYKKELEEQLGPVAEETRARLAKEVQAAQARLGADMEDLRNRLGQYRNEVHTMLGQSTEEIRARLSTHLRKMRKRLMRDAEDLQKRLAVYKAGAREGAERGVSALRERLGPLVEQGRQRTANLGAGAAQPLRDRAQAFGDRIRGRLEEVGNQARDRLEEVREHMEEVRSKMEEQTQQIRLQAEIFQARLKGWFEPIVEDMHRQWANLMEKIQASVATNPIISTPMPQENQ</sequence>